<comment type="function">
    <text evidence="1">Splits internally a 1,3-beta-glucan molecule and transfers the newly generated reducing end (the donor) to the non-reducing end of another 1,3-beta-glucan molecule (the acceptor) forming a 1,3-beta linkage, resulting in the elongation of 1,3-beta-glucan chains in the cell wall. Involved in cell wall biosynthesis and morphogenesis (By similarity).</text>
</comment>
<comment type="subcellular location">
    <subcellularLocation>
        <location evidence="6">Secreted</location>
    </subcellularLocation>
    <subcellularLocation>
        <location evidence="1">Cell membrane</location>
        <topology evidence="1">Lipid-anchor</topology>
        <topology evidence="1">GPI-anchor</topology>
    </subcellularLocation>
    <subcellularLocation>
        <location evidence="1">Secreted</location>
        <location evidence="1">Cell wall</location>
    </subcellularLocation>
    <text evidence="1">Identified as GPI-anchored plasma membrane protein (GPI-PMP) as well as covalently-linked GPI-modified cell wall protein (GPI-CWP) in the outer cell wall layer.</text>
</comment>
<comment type="PTM">
    <text evidence="1">The GPI-anchor is attached to the protein in the endoplasmic reticulum and serves to target the protein to the cell surface. There, the glucosamine-inositol phospholipid moiety is cleaved off and the GPI-modified mannoprotein is covalently attached via its lipidless GPI glycan remnant to the 1,6-beta-glucan of the outer cell wall layer.</text>
</comment>
<comment type="similarity">
    <text evidence="7">Belongs to the glycosyl hydrolase 72 family.</text>
</comment>
<name>GAS1_ARTBC</name>
<accession>D4ATC3</accession>
<feature type="signal peptide" evidence="3">
    <location>
        <begin position="1"/>
        <end position="19"/>
    </location>
</feature>
<feature type="chain" id="PRO_5001341169" description="1,3-beta-glucanosyltransferase ARB_07487" evidence="3">
    <location>
        <begin position="20"/>
        <end position="512"/>
    </location>
</feature>
<feature type="propeptide" id="PRO_0000434665" description="Removed in mature form" evidence="3">
    <location>
        <begin position="513"/>
        <end position="545"/>
    </location>
</feature>
<feature type="region of interest" description="Disordered" evidence="5">
    <location>
        <begin position="493"/>
        <end position="513"/>
    </location>
</feature>
<feature type="active site" description="Proton donor" evidence="2">
    <location>
        <position position="175"/>
    </location>
</feature>
<feature type="active site" description="Nucleophile" evidence="2">
    <location>
        <position position="276"/>
    </location>
</feature>
<feature type="binding site" evidence="2">
    <location>
        <position position="106"/>
    </location>
    <ligand>
        <name>(1,3-beta-D-glucosyl)n</name>
        <dbReference type="ChEBI" id="CHEBI:37671"/>
        <label>1</label>
        <note>donor substrate</note>
    </ligand>
</feature>
<feature type="binding site" evidence="2">
    <location>
        <begin position="133"/>
        <end position="141"/>
    </location>
    <ligand>
        <name>(1,3-beta-D-glucosyl)n</name>
        <dbReference type="ChEBI" id="CHEBI:37671"/>
        <label>1</label>
        <note>donor substrate</note>
    </ligand>
</feature>
<feature type="binding site" evidence="2">
    <location>
        <position position="174"/>
    </location>
    <ligand>
        <name>(1,3-beta-D-glucosyl)n</name>
        <dbReference type="ChEBI" id="CHEBI:37671"/>
        <label>1</label>
        <note>donor substrate</note>
    </ligand>
</feature>
<feature type="binding site" evidence="2">
    <location>
        <position position="175"/>
    </location>
    <ligand>
        <name>(1,3-beta-D-glucosyl)n</name>
        <dbReference type="ChEBI" id="CHEBI:37671"/>
        <label>2</label>
        <note>acceptor substrate</note>
    </ligand>
</feature>
<feature type="binding site" evidence="2">
    <location>
        <position position="216"/>
    </location>
    <ligand>
        <name>(1,3-beta-D-glucosyl)n</name>
        <dbReference type="ChEBI" id="CHEBI:37671"/>
        <label>2</label>
        <note>acceptor substrate</note>
    </ligand>
</feature>
<feature type="binding site" evidence="2">
    <location>
        <position position="221"/>
    </location>
    <ligand>
        <name>(1,3-beta-D-glucosyl)n</name>
        <dbReference type="ChEBI" id="CHEBI:37671"/>
        <label>2</label>
        <note>acceptor substrate</note>
    </ligand>
</feature>
<feature type="binding site" evidence="2">
    <location>
        <position position="308"/>
    </location>
    <ligand>
        <name>(1,3-beta-D-glucosyl)n</name>
        <dbReference type="ChEBI" id="CHEBI:37671"/>
        <label>1</label>
        <note>donor substrate</note>
    </ligand>
</feature>
<feature type="lipid moiety-binding region" description="GPI-anchor amidated alanine" evidence="3">
    <location>
        <position position="512"/>
    </location>
</feature>
<feature type="glycosylation site" description="N-linked (GlcNAc...) asparagine" evidence="4">
    <location>
        <position position="51"/>
    </location>
</feature>
<feature type="glycosylation site" description="N-linked (GlcNAc...) asparagine" evidence="4">
    <location>
        <position position="69"/>
    </location>
</feature>
<feature type="glycosylation site" description="N-linked (GlcNAc...) asparagine" evidence="4">
    <location>
        <position position="179"/>
    </location>
</feature>
<feature type="disulfide bond" evidence="2">
    <location>
        <begin position="88"/>
        <end position="117"/>
    </location>
</feature>
<feature type="disulfide bond" evidence="2">
    <location>
        <begin position="230"/>
        <end position="363"/>
    </location>
</feature>
<feature type="disulfide bond" evidence="2">
    <location>
        <begin position="248"/>
        <end position="279"/>
    </location>
</feature>
<feature type="disulfide bond" evidence="2">
    <location>
        <begin position="384"/>
        <end position="437"/>
    </location>
</feature>
<feature type="disulfide bond" evidence="2">
    <location>
        <begin position="393"/>
        <end position="464"/>
    </location>
</feature>
<feature type="disulfide bond" evidence="2">
    <location>
        <begin position="412"/>
        <end position="419"/>
    </location>
</feature>
<keyword id="KW-1003">Cell membrane</keyword>
<keyword id="KW-0134">Cell wall</keyword>
<keyword id="KW-0961">Cell wall biogenesis/degradation</keyword>
<keyword id="KW-1015">Disulfide bond</keyword>
<keyword id="KW-0325">Glycoprotein</keyword>
<keyword id="KW-0336">GPI-anchor</keyword>
<keyword id="KW-0449">Lipoprotein</keyword>
<keyword id="KW-0472">Membrane</keyword>
<keyword id="KW-1185">Reference proteome</keyword>
<keyword id="KW-0964">Secreted</keyword>
<keyword id="KW-0732">Signal</keyword>
<keyword id="KW-0808">Transferase</keyword>
<dbReference type="EC" id="2.4.1.-" evidence="1"/>
<dbReference type="EMBL" id="ABSU01000009">
    <property type="protein sequence ID" value="EFE33542.1"/>
    <property type="molecule type" value="Genomic_DNA"/>
</dbReference>
<dbReference type="RefSeq" id="XP_003014182.1">
    <property type="nucleotide sequence ID" value="XM_003014136.1"/>
</dbReference>
<dbReference type="SMR" id="D4ATC3"/>
<dbReference type="STRING" id="663331.D4ATC3"/>
<dbReference type="GeneID" id="9521600"/>
<dbReference type="KEGG" id="abe:ARB_07487"/>
<dbReference type="eggNOG" id="ENOG502QPST">
    <property type="taxonomic scope" value="Eukaryota"/>
</dbReference>
<dbReference type="HOGENOM" id="CLU_021855_2_1_1"/>
<dbReference type="OMA" id="MTAYFNC"/>
<dbReference type="Proteomes" id="UP000008866">
    <property type="component" value="Unassembled WGS sequence"/>
</dbReference>
<dbReference type="GO" id="GO:0005576">
    <property type="term" value="C:extracellular region"/>
    <property type="evidence" value="ECO:0007669"/>
    <property type="project" value="UniProtKB-SubCell"/>
</dbReference>
<dbReference type="GO" id="GO:0005886">
    <property type="term" value="C:plasma membrane"/>
    <property type="evidence" value="ECO:0007669"/>
    <property type="project" value="UniProtKB-SubCell"/>
</dbReference>
<dbReference type="GO" id="GO:0098552">
    <property type="term" value="C:side of membrane"/>
    <property type="evidence" value="ECO:0007669"/>
    <property type="project" value="UniProtKB-KW"/>
</dbReference>
<dbReference type="GO" id="GO:0042124">
    <property type="term" value="F:1,3-beta-glucanosyltransferase activity"/>
    <property type="evidence" value="ECO:0007669"/>
    <property type="project" value="TreeGrafter"/>
</dbReference>
<dbReference type="GO" id="GO:0071970">
    <property type="term" value="P:fungal-type cell wall (1-&gt;3)-beta-D-glucan biosynthetic process"/>
    <property type="evidence" value="ECO:0007669"/>
    <property type="project" value="TreeGrafter"/>
</dbReference>
<dbReference type="GO" id="GO:0031505">
    <property type="term" value="P:fungal-type cell wall organization"/>
    <property type="evidence" value="ECO:0007669"/>
    <property type="project" value="TreeGrafter"/>
</dbReference>
<dbReference type="FunFam" id="3.20.20.80:FF:000038">
    <property type="entry name" value="1,3-beta-glucanosyltransferase"/>
    <property type="match status" value="1"/>
</dbReference>
<dbReference type="Gene3D" id="1.20.58.1040">
    <property type="match status" value="1"/>
</dbReference>
<dbReference type="Gene3D" id="3.20.20.80">
    <property type="entry name" value="Glycosidases"/>
    <property type="match status" value="1"/>
</dbReference>
<dbReference type="InterPro" id="IPR004886">
    <property type="entry name" value="Glucanosyltransferase"/>
</dbReference>
<dbReference type="InterPro" id="IPR017853">
    <property type="entry name" value="Glycoside_hydrolase_SF"/>
</dbReference>
<dbReference type="InterPro" id="IPR012946">
    <property type="entry name" value="X8"/>
</dbReference>
<dbReference type="PANTHER" id="PTHR31468">
    <property type="entry name" value="1,3-BETA-GLUCANOSYLTRANSFERASE GAS1"/>
    <property type="match status" value="1"/>
</dbReference>
<dbReference type="PANTHER" id="PTHR31468:SF2">
    <property type="entry name" value="1,3-BETA-GLUCANOSYLTRANSFERASE GAS1"/>
    <property type="match status" value="1"/>
</dbReference>
<dbReference type="Pfam" id="PF03198">
    <property type="entry name" value="Glyco_hydro_72"/>
    <property type="match status" value="1"/>
</dbReference>
<dbReference type="Pfam" id="PF07983">
    <property type="entry name" value="X8"/>
    <property type="match status" value="1"/>
</dbReference>
<dbReference type="SMART" id="SM00768">
    <property type="entry name" value="X8"/>
    <property type="match status" value="1"/>
</dbReference>
<dbReference type="SUPFAM" id="SSF51445">
    <property type="entry name" value="(Trans)glycosidases"/>
    <property type="match status" value="1"/>
</dbReference>
<proteinExistence type="evidence at protein level"/>
<sequence>MKFSSLAAATALVAGSVVAADLDPIVIKVGVRSALIPGWPKGGSKFFYKSNGTEFFMKGIAYQQEFSTNGTSSDKNNYQDPLADVESCRRDIPLMQQLQTNTIRVYAIDPKKDHKQCMKLLQDAGIYVVADLSEPSTSIIRDDPKWDDVLYTRYTSVVDELAQYSNVIGFFAGNEVSNNSTNTDASAFVKAAVRDMKAYIKQKNYRSMGVGYATNDDAEIRKDMTAYFNCNKQEESIDFWGYNIYSWCGDSSYTESGYDKVVEEFKTFNVPVFFAEYGCNEVQPRKFTEVQALYGDKMTPVVSGGIVYMYFQEENDYGLVKIEGGKPKKLPDFNSLQKQISKIKPSGVQMDSYKPTNTALSTCPKSSTWKASVKLPPTPNKDLCSCMVKSLSCVAKPSVTGKELGKLFGTVCGSDKDACKGITADATSGTYGAYSMCSPSEKLSFAFNQYYQHQSAKGNGANACDFGGAATAQKSEKPSGSCANLVDQAGQDGTGSVTSAPGSGGNKPDQGAASTISAPSVNLGIVKLGAYIFCAVLAGAGMILI</sequence>
<gene>
    <name type="ORF">ARB_07487</name>
</gene>
<evidence type="ECO:0000250" key="1">
    <source>
        <dbReference type="UniProtKB" id="P22146"/>
    </source>
</evidence>
<evidence type="ECO:0000250" key="2">
    <source>
        <dbReference type="UniProtKB" id="Q06135"/>
    </source>
</evidence>
<evidence type="ECO:0000255" key="3"/>
<evidence type="ECO:0000255" key="4">
    <source>
        <dbReference type="PROSITE-ProRule" id="PRU00498"/>
    </source>
</evidence>
<evidence type="ECO:0000256" key="5">
    <source>
        <dbReference type="SAM" id="MobiDB-lite"/>
    </source>
</evidence>
<evidence type="ECO:0000269" key="6">
    <source>
    </source>
</evidence>
<evidence type="ECO:0000305" key="7"/>
<protein>
    <recommendedName>
        <fullName>1,3-beta-glucanosyltransferase ARB_07487</fullName>
        <ecNumber evidence="1">2.4.1.-</ecNumber>
    </recommendedName>
    <alternativeName>
        <fullName>Glycolipid-anchored surface protein ARB_07487</fullName>
    </alternativeName>
</protein>
<organism>
    <name type="scientific">Arthroderma benhamiae (strain ATCC MYA-4681 / CBS 112371)</name>
    <name type="common">Trichophyton mentagrophytes</name>
    <dbReference type="NCBI Taxonomy" id="663331"/>
    <lineage>
        <taxon>Eukaryota</taxon>
        <taxon>Fungi</taxon>
        <taxon>Dikarya</taxon>
        <taxon>Ascomycota</taxon>
        <taxon>Pezizomycotina</taxon>
        <taxon>Eurotiomycetes</taxon>
        <taxon>Eurotiomycetidae</taxon>
        <taxon>Onygenales</taxon>
        <taxon>Arthrodermataceae</taxon>
        <taxon>Trichophyton</taxon>
    </lineage>
</organism>
<reference key="1">
    <citation type="journal article" date="2011" name="Genome Biol.">
        <title>Comparative and functional genomics provide insights into the pathogenicity of dermatophytic fungi.</title>
        <authorList>
            <person name="Burmester A."/>
            <person name="Shelest E."/>
            <person name="Gloeckner G."/>
            <person name="Heddergott C."/>
            <person name="Schindler S."/>
            <person name="Staib P."/>
            <person name="Heidel A."/>
            <person name="Felder M."/>
            <person name="Petzold A."/>
            <person name="Szafranski K."/>
            <person name="Feuermann M."/>
            <person name="Pedruzzi I."/>
            <person name="Priebe S."/>
            <person name="Groth M."/>
            <person name="Winkler R."/>
            <person name="Li W."/>
            <person name="Kniemeyer O."/>
            <person name="Schroeckh V."/>
            <person name="Hertweck C."/>
            <person name="Hube B."/>
            <person name="White T.C."/>
            <person name="Platzer M."/>
            <person name="Guthke R."/>
            <person name="Heitman J."/>
            <person name="Woestemeyer J."/>
            <person name="Zipfel P.F."/>
            <person name="Monod M."/>
            <person name="Brakhage A.A."/>
        </authorList>
    </citation>
    <scope>NUCLEOTIDE SEQUENCE [LARGE SCALE GENOMIC DNA]</scope>
    <source>
        <strain>ATCC MYA-4681 / CBS 112371</strain>
    </source>
</reference>
<reference key="2">
    <citation type="journal article" date="2011" name="Proteomics">
        <title>Identification of novel secreted proteases during extracellular proteolysis by dermatophytes at acidic pH.</title>
        <authorList>
            <person name="Sriranganadane D."/>
            <person name="Waridel P."/>
            <person name="Salamin K."/>
            <person name="Feuermann M."/>
            <person name="Mignon B."/>
            <person name="Staib P."/>
            <person name="Neuhaus J.M."/>
            <person name="Quadroni M."/>
            <person name="Monod M."/>
        </authorList>
    </citation>
    <scope>IDENTIFICATION BY MASS SPECTROMETRY</scope>
    <scope>SUBCELLULAR LOCATION</scope>
</reference>